<accession>A4ITI8</accession>
<reference key="1">
    <citation type="journal article" date="2007" name="Proc. Natl. Acad. Sci. U.S.A.">
        <title>Genome and proteome of long-chain alkane degrading Geobacillus thermodenitrificans NG80-2 isolated from a deep-subsurface oil reservoir.</title>
        <authorList>
            <person name="Feng L."/>
            <person name="Wang W."/>
            <person name="Cheng J."/>
            <person name="Ren Y."/>
            <person name="Zhao G."/>
            <person name="Gao C."/>
            <person name="Tang Y."/>
            <person name="Liu X."/>
            <person name="Han W."/>
            <person name="Peng X."/>
            <person name="Liu R."/>
            <person name="Wang L."/>
        </authorList>
    </citation>
    <scope>NUCLEOTIDE SEQUENCE [LARGE SCALE GENOMIC DNA]</scope>
    <source>
        <strain>NG80-2</strain>
    </source>
</reference>
<name>ATPE_GEOTN</name>
<sequence>MKTIRVSVVTPDGPVYEGDVEMVSVKAKSGELGILPGHIPLVAPLEISAARLKKDGKTSYVAVSGGFLEVRPDKVTILAQAAERAEDIDVLRAKAAKERAERRLQSQQDDIDFKRAELALKRAMNRLNVAGMK</sequence>
<keyword id="KW-0066">ATP synthesis</keyword>
<keyword id="KW-1003">Cell membrane</keyword>
<keyword id="KW-0139">CF(1)</keyword>
<keyword id="KW-0375">Hydrogen ion transport</keyword>
<keyword id="KW-0406">Ion transport</keyword>
<keyword id="KW-0472">Membrane</keyword>
<keyword id="KW-0813">Transport</keyword>
<evidence type="ECO:0000255" key="1">
    <source>
        <dbReference type="HAMAP-Rule" id="MF_00530"/>
    </source>
</evidence>
<dbReference type="EMBL" id="CP000557">
    <property type="protein sequence ID" value="ABO68642.1"/>
    <property type="molecule type" value="Genomic_DNA"/>
</dbReference>
<dbReference type="RefSeq" id="WP_008880692.1">
    <property type="nucleotide sequence ID" value="NC_009328.1"/>
</dbReference>
<dbReference type="SMR" id="A4ITI8"/>
<dbReference type="GeneID" id="87622587"/>
<dbReference type="KEGG" id="gtn:GTNG_3303"/>
<dbReference type="eggNOG" id="COG0355">
    <property type="taxonomic scope" value="Bacteria"/>
</dbReference>
<dbReference type="HOGENOM" id="CLU_084338_1_3_9"/>
<dbReference type="Proteomes" id="UP000001578">
    <property type="component" value="Chromosome"/>
</dbReference>
<dbReference type="GO" id="GO:0005886">
    <property type="term" value="C:plasma membrane"/>
    <property type="evidence" value="ECO:0007669"/>
    <property type="project" value="UniProtKB-SubCell"/>
</dbReference>
<dbReference type="GO" id="GO:0045259">
    <property type="term" value="C:proton-transporting ATP synthase complex"/>
    <property type="evidence" value="ECO:0007669"/>
    <property type="project" value="UniProtKB-KW"/>
</dbReference>
<dbReference type="GO" id="GO:0005524">
    <property type="term" value="F:ATP binding"/>
    <property type="evidence" value="ECO:0007669"/>
    <property type="project" value="UniProtKB-UniRule"/>
</dbReference>
<dbReference type="GO" id="GO:0046933">
    <property type="term" value="F:proton-transporting ATP synthase activity, rotational mechanism"/>
    <property type="evidence" value="ECO:0007669"/>
    <property type="project" value="UniProtKB-UniRule"/>
</dbReference>
<dbReference type="CDD" id="cd12152">
    <property type="entry name" value="F1-ATPase_delta"/>
    <property type="match status" value="1"/>
</dbReference>
<dbReference type="FunFam" id="1.20.5.440:FF:000001">
    <property type="entry name" value="ATP synthase epsilon chain"/>
    <property type="match status" value="1"/>
</dbReference>
<dbReference type="FunFam" id="2.60.15.10:FF:000001">
    <property type="entry name" value="ATP synthase epsilon chain"/>
    <property type="match status" value="1"/>
</dbReference>
<dbReference type="Gene3D" id="1.20.5.440">
    <property type="entry name" value="ATP synthase delta/epsilon subunit, C-terminal domain"/>
    <property type="match status" value="1"/>
</dbReference>
<dbReference type="Gene3D" id="2.60.15.10">
    <property type="entry name" value="F0F1 ATP synthase delta/epsilon subunit, N-terminal"/>
    <property type="match status" value="1"/>
</dbReference>
<dbReference type="HAMAP" id="MF_00530">
    <property type="entry name" value="ATP_synth_epsil_bac"/>
    <property type="match status" value="1"/>
</dbReference>
<dbReference type="InterPro" id="IPR036794">
    <property type="entry name" value="ATP_F1_dsu/esu_C_sf"/>
</dbReference>
<dbReference type="InterPro" id="IPR001469">
    <property type="entry name" value="ATP_synth_F1_dsu/esu"/>
</dbReference>
<dbReference type="InterPro" id="IPR020546">
    <property type="entry name" value="ATP_synth_F1_dsu/esu_N"/>
</dbReference>
<dbReference type="InterPro" id="IPR020547">
    <property type="entry name" value="ATP_synth_F1_esu_C"/>
</dbReference>
<dbReference type="InterPro" id="IPR036771">
    <property type="entry name" value="ATPsynth_dsu/esu_N"/>
</dbReference>
<dbReference type="NCBIfam" id="TIGR01216">
    <property type="entry name" value="ATP_synt_epsi"/>
    <property type="match status" value="1"/>
</dbReference>
<dbReference type="NCBIfam" id="NF001846">
    <property type="entry name" value="PRK00571.1-3"/>
    <property type="match status" value="1"/>
</dbReference>
<dbReference type="NCBIfam" id="NF009980">
    <property type="entry name" value="PRK13446.1"/>
    <property type="match status" value="1"/>
</dbReference>
<dbReference type="PANTHER" id="PTHR13822">
    <property type="entry name" value="ATP SYNTHASE DELTA/EPSILON CHAIN"/>
    <property type="match status" value="1"/>
</dbReference>
<dbReference type="PANTHER" id="PTHR13822:SF10">
    <property type="entry name" value="ATP SYNTHASE EPSILON CHAIN, CHLOROPLASTIC"/>
    <property type="match status" value="1"/>
</dbReference>
<dbReference type="Pfam" id="PF00401">
    <property type="entry name" value="ATP-synt_DE"/>
    <property type="match status" value="1"/>
</dbReference>
<dbReference type="Pfam" id="PF02823">
    <property type="entry name" value="ATP-synt_DE_N"/>
    <property type="match status" value="1"/>
</dbReference>
<dbReference type="SUPFAM" id="SSF46604">
    <property type="entry name" value="Epsilon subunit of F1F0-ATP synthase C-terminal domain"/>
    <property type="match status" value="1"/>
</dbReference>
<dbReference type="SUPFAM" id="SSF51344">
    <property type="entry name" value="Epsilon subunit of F1F0-ATP synthase N-terminal domain"/>
    <property type="match status" value="1"/>
</dbReference>
<protein>
    <recommendedName>
        <fullName evidence="1">ATP synthase epsilon chain</fullName>
    </recommendedName>
    <alternativeName>
        <fullName evidence="1">ATP synthase F1 sector epsilon subunit</fullName>
    </alternativeName>
    <alternativeName>
        <fullName evidence="1">F-ATPase epsilon subunit</fullName>
    </alternativeName>
</protein>
<proteinExistence type="inferred from homology"/>
<feature type="chain" id="PRO_1000056485" description="ATP synthase epsilon chain">
    <location>
        <begin position="1"/>
        <end position="133"/>
    </location>
</feature>
<organism>
    <name type="scientific">Geobacillus thermodenitrificans (strain NG80-2)</name>
    <dbReference type="NCBI Taxonomy" id="420246"/>
    <lineage>
        <taxon>Bacteria</taxon>
        <taxon>Bacillati</taxon>
        <taxon>Bacillota</taxon>
        <taxon>Bacilli</taxon>
        <taxon>Bacillales</taxon>
        <taxon>Anoxybacillaceae</taxon>
        <taxon>Geobacillus</taxon>
    </lineage>
</organism>
<gene>
    <name evidence="1" type="primary">atpC</name>
    <name type="ordered locus">GTNG_3303</name>
</gene>
<comment type="function">
    <text evidence="1">Produces ATP from ADP in the presence of a proton gradient across the membrane.</text>
</comment>
<comment type="subunit">
    <text evidence="1">F-type ATPases have 2 components, CF(1) - the catalytic core - and CF(0) - the membrane proton channel. CF(1) has five subunits: alpha(3), beta(3), gamma(1), delta(1), epsilon(1). CF(0) has three main subunits: a, b and c.</text>
</comment>
<comment type="subcellular location">
    <subcellularLocation>
        <location evidence="1">Cell membrane</location>
        <topology evidence="1">Peripheral membrane protein</topology>
    </subcellularLocation>
</comment>
<comment type="similarity">
    <text evidence="1">Belongs to the ATPase epsilon chain family.</text>
</comment>